<organism>
    <name type="scientific">Rattus norvegicus</name>
    <name type="common">Rat</name>
    <dbReference type="NCBI Taxonomy" id="10116"/>
    <lineage>
        <taxon>Eukaryota</taxon>
        <taxon>Metazoa</taxon>
        <taxon>Chordata</taxon>
        <taxon>Craniata</taxon>
        <taxon>Vertebrata</taxon>
        <taxon>Euteleostomi</taxon>
        <taxon>Mammalia</taxon>
        <taxon>Eutheria</taxon>
        <taxon>Euarchontoglires</taxon>
        <taxon>Glires</taxon>
        <taxon>Rodentia</taxon>
        <taxon>Myomorpha</taxon>
        <taxon>Muroidea</taxon>
        <taxon>Muridae</taxon>
        <taxon>Murinae</taxon>
        <taxon>Rattus</taxon>
    </lineage>
</organism>
<accession>Q5RJZ6</accession>
<accession>Q0D2M9</accession>
<evidence type="ECO:0000250" key="1">
    <source>
        <dbReference type="UniProtKB" id="Q9UIL1"/>
    </source>
</evidence>
<evidence type="ECO:0000255" key="2"/>
<evidence type="ECO:0000256" key="3">
    <source>
        <dbReference type="SAM" id="MobiDB-lite"/>
    </source>
</evidence>
<evidence type="ECO:0000305" key="4"/>
<feature type="chain" id="PRO_0000334166" description="Short coiled-coil protein">
    <location>
        <begin position="1"/>
        <end position="122"/>
    </location>
</feature>
<feature type="region of interest" description="Disordered" evidence="3">
    <location>
        <begin position="1"/>
        <end position="26"/>
    </location>
</feature>
<feature type="coiled-coil region" evidence="2">
    <location>
        <begin position="43"/>
        <end position="101"/>
    </location>
</feature>
<name>SCOC_RAT</name>
<reference key="1">
    <citation type="journal article" date="2004" name="Genome Res.">
        <title>The status, quality, and expansion of the NIH full-length cDNA project: the Mammalian Gene Collection (MGC).</title>
        <authorList>
            <consortium name="The MGC Project Team"/>
        </authorList>
    </citation>
    <scope>NUCLEOTIDE SEQUENCE [LARGE SCALE MRNA]</scope>
    <source>
        <tissue>Kidney</tissue>
    </source>
</reference>
<keyword id="KW-0175">Coiled coil</keyword>
<keyword id="KW-0963">Cytoplasm</keyword>
<keyword id="KW-0333">Golgi apparatus</keyword>
<keyword id="KW-0472">Membrane</keyword>
<keyword id="KW-1185">Reference proteome</keyword>
<dbReference type="EMBL" id="BC076390">
    <property type="protein sequence ID" value="AAH76390.2"/>
    <property type="status" value="ALT_INIT"/>
    <property type="molecule type" value="mRNA"/>
</dbReference>
<dbReference type="EMBL" id="BC086417">
    <property type="protein sequence ID" value="AAH86417.1"/>
    <property type="status" value="ALT_INIT"/>
    <property type="molecule type" value="mRNA"/>
</dbReference>
<dbReference type="RefSeq" id="NP_001013253.1">
    <property type="nucleotide sequence ID" value="NM_001013235.1"/>
</dbReference>
<dbReference type="SMR" id="Q5RJZ6"/>
<dbReference type="FunCoup" id="Q5RJZ6">
    <property type="interactions" value="1534"/>
</dbReference>
<dbReference type="STRING" id="10116.ENSRNOP00000005124"/>
<dbReference type="PhosphoSitePlus" id="Q5RJZ6"/>
<dbReference type="jPOST" id="Q5RJZ6"/>
<dbReference type="PaxDb" id="10116-ENSRNOP00000005124"/>
<dbReference type="GeneID" id="364981"/>
<dbReference type="KEGG" id="rno:364981"/>
<dbReference type="AGR" id="RGD:1311860"/>
<dbReference type="CTD" id="60592"/>
<dbReference type="RGD" id="1311860">
    <property type="gene designation" value="Scoc"/>
</dbReference>
<dbReference type="VEuPathDB" id="HostDB:ENSRNOG00000003853"/>
<dbReference type="eggNOG" id="KOG3650">
    <property type="taxonomic scope" value="Eukaryota"/>
</dbReference>
<dbReference type="HOGENOM" id="CLU_130081_1_0_1"/>
<dbReference type="InParanoid" id="Q5RJZ6"/>
<dbReference type="OrthoDB" id="75622at9989"/>
<dbReference type="PhylomeDB" id="Q5RJZ6"/>
<dbReference type="TreeFam" id="TF323340"/>
<dbReference type="Reactome" id="R-RNO-6811440">
    <property type="pathway name" value="Retrograde transport at the Trans-Golgi-Network"/>
</dbReference>
<dbReference type="PRO" id="PR:Q5RJZ6"/>
<dbReference type="Proteomes" id="UP000002494">
    <property type="component" value="Chromosome 19"/>
</dbReference>
<dbReference type="Bgee" id="ENSRNOG00000003853">
    <property type="expression patterns" value="Expressed in Ammon's horn and 20 other cell types or tissues"/>
</dbReference>
<dbReference type="GO" id="GO:0005829">
    <property type="term" value="C:cytosol"/>
    <property type="evidence" value="ECO:0007669"/>
    <property type="project" value="UniProtKB-SubCell"/>
</dbReference>
<dbReference type="GO" id="GO:0005768">
    <property type="term" value="C:endosome"/>
    <property type="evidence" value="ECO:0000266"/>
    <property type="project" value="RGD"/>
</dbReference>
<dbReference type="GO" id="GO:0000139">
    <property type="term" value="C:Golgi membrane"/>
    <property type="evidence" value="ECO:0007669"/>
    <property type="project" value="UniProtKB-SubCell"/>
</dbReference>
<dbReference type="GO" id="GO:0005802">
    <property type="term" value="C:trans-Golgi network"/>
    <property type="evidence" value="ECO:0000266"/>
    <property type="project" value="RGD"/>
</dbReference>
<dbReference type="GO" id="GO:0016239">
    <property type="term" value="P:positive regulation of macroautophagy"/>
    <property type="evidence" value="ECO:0000250"/>
    <property type="project" value="GO_Central"/>
</dbReference>
<dbReference type="GO" id="GO:0061635">
    <property type="term" value="P:regulation of protein complex stability"/>
    <property type="evidence" value="ECO:0000250"/>
    <property type="project" value="GO_Central"/>
</dbReference>
<dbReference type="FunFam" id="1.20.5.170:FF:000038">
    <property type="entry name" value="Short coiled-coil protein a"/>
    <property type="match status" value="1"/>
</dbReference>
<dbReference type="Gene3D" id="1.20.5.170">
    <property type="match status" value="1"/>
</dbReference>
<dbReference type="InterPro" id="IPR019357">
    <property type="entry name" value="SCOC"/>
</dbReference>
<dbReference type="PANTHER" id="PTHR21614">
    <property type="entry name" value="SHORT COILED COIL PROTEIN"/>
    <property type="match status" value="1"/>
</dbReference>
<dbReference type="PANTHER" id="PTHR21614:SF1">
    <property type="entry name" value="SHORT COILED-COIL PROTEIN"/>
    <property type="match status" value="1"/>
</dbReference>
<dbReference type="Pfam" id="PF10224">
    <property type="entry name" value="DUF2205"/>
    <property type="match status" value="1"/>
</dbReference>
<gene>
    <name type="primary">Scoc</name>
    <name type="synonym">Scoco</name>
</gene>
<sequence length="122" mass="13689">MDGLNTGEEEDSAFTSISLTDDTDHSLKSLHSGAERLFPKMMNADMDAVDAENQVELEEKTRLINQVLELQHTLEDLSARVDAVKEENLKLKSENQVLGQYIENLMSASSVFQTTDTKSKRK</sequence>
<comment type="function">
    <text evidence="1">Positive regulator of amino acid starvation-induced autophagy.</text>
</comment>
<comment type="subunit">
    <text evidence="1">Homodimer. Interacts with ARL1, ARL2 and ARL3. Directly interacts with FEZ1 and UVRAG. The interaction with UVRAG is reduced by amino acid starvation, but the complex is stabilized in the presence of FEZ1. Interacts with NRBF2.</text>
</comment>
<comment type="subcellular location">
    <subcellularLocation>
        <location evidence="1">Golgi apparatus membrane</location>
        <topology evidence="1">Peripheral membrane protein</topology>
        <orientation evidence="1">Cytoplasmic side</orientation>
    </subcellularLocation>
    <subcellularLocation>
        <location evidence="1">Golgi apparatus</location>
        <location evidence="1">trans-Golgi network</location>
    </subcellularLocation>
    <subcellularLocation>
        <location evidence="1">Cytoplasm</location>
        <location evidence="1">Cytosol</location>
    </subcellularLocation>
</comment>
<comment type="similarity">
    <text evidence="4">Belongs to the SCOC family.</text>
</comment>
<comment type="sequence caution" evidence="4">
    <conflict type="erroneous initiation">
        <sequence resource="EMBL-CDS" id="AAH76390"/>
    </conflict>
</comment>
<comment type="sequence caution" evidence="4">
    <conflict type="erroneous initiation">
        <sequence resource="EMBL-CDS" id="AAH86417"/>
    </conflict>
</comment>
<protein>
    <recommendedName>
        <fullName>Short coiled-coil protein</fullName>
    </recommendedName>
</protein>
<proteinExistence type="evidence at transcript level"/>